<proteinExistence type="evidence at transcript level"/>
<organism>
    <name type="scientific">Arabidopsis thaliana</name>
    <name type="common">Mouse-ear cress</name>
    <dbReference type="NCBI Taxonomy" id="3702"/>
    <lineage>
        <taxon>Eukaryota</taxon>
        <taxon>Viridiplantae</taxon>
        <taxon>Streptophyta</taxon>
        <taxon>Embryophyta</taxon>
        <taxon>Tracheophyta</taxon>
        <taxon>Spermatophyta</taxon>
        <taxon>Magnoliopsida</taxon>
        <taxon>eudicotyledons</taxon>
        <taxon>Gunneridae</taxon>
        <taxon>Pentapetalae</taxon>
        <taxon>rosids</taxon>
        <taxon>malvids</taxon>
        <taxon>Brassicales</taxon>
        <taxon>Brassicaceae</taxon>
        <taxon>Camelineae</taxon>
        <taxon>Arabidopsis</taxon>
    </lineage>
</organism>
<dbReference type="EC" id="3.1.1.3"/>
<dbReference type="EMBL" id="AB007650">
    <property type="protein sequence ID" value="BAB08297.1"/>
    <property type="status" value="ALT_SEQ"/>
    <property type="molecule type" value="Genomic_DNA"/>
</dbReference>
<dbReference type="EMBL" id="AB007650">
    <property type="protein sequence ID" value="BAB08298.1"/>
    <property type="status" value="ALT_SEQ"/>
    <property type="molecule type" value="Genomic_DNA"/>
</dbReference>
<dbReference type="EMBL" id="CP002688">
    <property type="protein sequence ID" value="AED91996.1"/>
    <property type="molecule type" value="Genomic_DNA"/>
</dbReference>
<dbReference type="EMBL" id="AK175707">
    <property type="protein sequence ID" value="BAD43470.1"/>
    <property type="molecule type" value="mRNA"/>
</dbReference>
<dbReference type="EMBL" id="AK176026">
    <property type="protein sequence ID" value="BAD43789.1"/>
    <property type="molecule type" value="mRNA"/>
</dbReference>
<dbReference type="EMBL" id="AY320231">
    <property type="protein sequence ID" value="AAQ84586.1"/>
    <property type="molecule type" value="mRNA"/>
</dbReference>
<dbReference type="EMBL" id="AY048236">
    <property type="protein sequence ID" value="AAK82499.1"/>
    <property type="status" value="ALT_INIT"/>
    <property type="molecule type" value="mRNA"/>
</dbReference>
<dbReference type="EMBL" id="AY091711">
    <property type="protein sequence ID" value="AAM10310.1"/>
    <property type="molecule type" value="mRNA"/>
</dbReference>
<dbReference type="RefSeq" id="NP_568295.2">
    <property type="nucleotide sequence ID" value="NM_121422.4"/>
</dbReference>
<dbReference type="SMR" id="Q67ZU1"/>
<dbReference type="BioGRID" id="16546">
    <property type="interactions" value="1"/>
</dbReference>
<dbReference type="FunCoup" id="Q67ZU1">
    <property type="interactions" value="473"/>
</dbReference>
<dbReference type="STRING" id="3702.Q67ZU1"/>
<dbReference type="ESTHER" id="arath-LIP2">
    <property type="family name" value="Acidic_Lipase"/>
</dbReference>
<dbReference type="MEROPS" id="S33.A64"/>
<dbReference type="GlyCosmos" id="Q67ZU1">
    <property type="glycosylation" value="3 sites, No reported glycans"/>
</dbReference>
<dbReference type="GlyGen" id="Q67ZU1">
    <property type="glycosylation" value="3 sites"/>
</dbReference>
<dbReference type="PaxDb" id="3702-AT5G14180.1"/>
<dbReference type="EnsemblPlants" id="AT5G14180.1">
    <property type="protein sequence ID" value="AT5G14180.1"/>
    <property type="gene ID" value="AT5G14180"/>
</dbReference>
<dbReference type="GeneID" id="831268"/>
<dbReference type="Gramene" id="AT5G14180.1">
    <property type="protein sequence ID" value="AT5G14180.1"/>
    <property type="gene ID" value="AT5G14180"/>
</dbReference>
<dbReference type="KEGG" id="ath:AT5G14180"/>
<dbReference type="Araport" id="AT5G14180"/>
<dbReference type="TAIR" id="AT5G14180">
    <property type="gene designation" value="MPL1"/>
</dbReference>
<dbReference type="eggNOG" id="KOG2624">
    <property type="taxonomic scope" value="Eukaryota"/>
</dbReference>
<dbReference type="HOGENOM" id="CLU_010974_1_1_1"/>
<dbReference type="InParanoid" id="Q67ZU1"/>
<dbReference type="OMA" id="WSRRNLY"/>
<dbReference type="OrthoDB" id="9974421at2759"/>
<dbReference type="PhylomeDB" id="Q67ZU1"/>
<dbReference type="BioCyc" id="ARA:AT5G14180-MONOMER"/>
<dbReference type="PRO" id="PR:Q67ZU1"/>
<dbReference type="Proteomes" id="UP000006548">
    <property type="component" value="Chromosome 5"/>
</dbReference>
<dbReference type="ExpressionAtlas" id="Q67ZU1">
    <property type="expression patterns" value="baseline and differential"/>
</dbReference>
<dbReference type="GO" id="GO:0005576">
    <property type="term" value="C:extracellular region"/>
    <property type="evidence" value="ECO:0007669"/>
    <property type="project" value="UniProtKB-SubCell"/>
</dbReference>
<dbReference type="GO" id="GO:0016298">
    <property type="term" value="F:lipase activity"/>
    <property type="evidence" value="ECO:0000314"/>
    <property type="project" value="TAIR"/>
</dbReference>
<dbReference type="GO" id="GO:0004806">
    <property type="term" value="F:triacylglycerol lipase activity"/>
    <property type="evidence" value="ECO:0007669"/>
    <property type="project" value="UniProtKB-EC"/>
</dbReference>
<dbReference type="GO" id="GO:0002213">
    <property type="term" value="P:defense response to insect"/>
    <property type="evidence" value="ECO:0000315"/>
    <property type="project" value="TAIR"/>
</dbReference>
<dbReference type="GO" id="GO:0016042">
    <property type="term" value="P:lipid catabolic process"/>
    <property type="evidence" value="ECO:0007669"/>
    <property type="project" value="UniProtKB-KW"/>
</dbReference>
<dbReference type="FunFam" id="3.40.50.1820:FF:000126">
    <property type="entry name" value="Lipase"/>
    <property type="match status" value="1"/>
</dbReference>
<dbReference type="Gene3D" id="3.40.50.1820">
    <property type="entry name" value="alpha/beta hydrolase"/>
    <property type="match status" value="1"/>
</dbReference>
<dbReference type="InterPro" id="IPR029058">
    <property type="entry name" value="AB_hydrolase_fold"/>
</dbReference>
<dbReference type="InterPro" id="IPR006693">
    <property type="entry name" value="AB_hydrolase_lipase"/>
</dbReference>
<dbReference type="InterPro" id="IPR025483">
    <property type="entry name" value="Lipase_euk"/>
</dbReference>
<dbReference type="PANTHER" id="PTHR11005">
    <property type="entry name" value="LYSOSOMAL ACID LIPASE-RELATED"/>
    <property type="match status" value="1"/>
</dbReference>
<dbReference type="Pfam" id="PF04083">
    <property type="entry name" value="Abhydro_lipase"/>
    <property type="match status" value="1"/>
</dbReference>
<dbReference type="PIRSF" id="PIRSF000862">
    <property type="entry name" value="Steryl_ester_lip"/>
    <property type="match status" value="1"/>
</dbReference>
<dbReference type="SUPFAM" id="SSF53474">
    <property type="entry name" value="alpha/beta-Hydrolases"/>
    <property type="match status" value="1"/>
</dbReference>
<dbReference type="PROSITE" id="PS00120">
    <property type="entry name" value="LIPASE_SER"/>
    <property type="match status" value="1"/>
</dbReference>
<gene>
    <name type="primary">LIP2</name>
    <name type="ordered locus">At5g14180</name>
    <name type="ORF">MUA22.18</name>
    <name type="ORF">MUA22.19</name>
</gene>
<evidence type="ECO:0000250" key="1"/>
<evidence type="ECO:0000255" key="2"/>
<evidence type="ECO:0000255" key="3">
    <source>
        <dbReference type="PROSITE-ProRule" id="PRU10037"/>
    </source>
</evidence>
<evidence type="ECO:0000305" key="4"/>
<comment type="function">
    <text evidence="1">Triacylglycerol (TAG) lipase. May be involved for TAG storage breakdown during seed germination (By similarity).</text>
</comment>
<comment type="catalytic activity">
    <reaction>
        <text>a triacylglycerol + H2O = a diacylglycerol + a fatty acid + H(+)</text>
        <dbReference type="Rhea" id="RHEA:12044"/>
        <dbReference type="ChEBI" id="CHEBI:15377"/>
        <dbReference type="ChEBI" id="CHEBI:15378"/>
        <dbReference type="ChEBI" id="CHEBI:17855"/>
        <dbReference type="ChEBI" id="CHEBI:18035"/>
        <dbReference type="ChEBI" id="CHEBI:28868"/>
        <dbReference type="EC" id="3.1.1.3"/>
    </reaction>
</comment>
<comment type="subcellular location">
    <subcellularLocation>
        <location evidence="4">Secreted</location>
    </subcellularLocation>
</comment>
<comment type="similarity">
    <text evidence="4">Belongs to the AB hydrolase superfamily. Lipase family.</text>
</comment>
<comment type="sequence caution" evidence="4">
    <conflict type="erroneous initiation">
        <sequence resource="EMBL-CDS" id="AAK82499"/>
    </conflict>
</comment>
<comment type="sequence caution" evidence="4">
    <conflict type="erroneous gene model prediction">
        <sequence resource="EMBL-CDS" id="BAB08297"/>
    </conflict>
</comment>
<comment type="sequence caution" evidence="4">
    <conflict type="erroneous gene model prediction">
        <sequence resource="EMBL-CDS" id="BAB08298"/>
    </conflict>
</comment>
<reference key="1">
    <citation type="journal article" date="1997" name="DNA Res.">
        <title>Structural analysis of Arabidopsis thaliana chromosome 5. III. Sequence features of the regions of 1,191,918 bp covered by seventeen physically assigned P1 clones.</title>
        <authorList>
            <person name="Nakamura Y."/>
            <person name="Sato S."/>
            <person name="Kaneko T."/>
            <person name="Kotani H."/>
            <person name="Asamizu E."/>
            <person name="Miyajima N."/>
            <person name="Tabata S."/>
        </authorList>
    </citation>
    <scope>NUCLEOTIDE SEQUENCE [LARGE SCALE GENOMIC DNA]</scope>
    <source>
        <strain>cv. Columbia</strain>
    </source>
</reference>
<reference key="2">
    <citation type="journal article" date="2017" name="Plant J.">
        <title>Araport11: a complete reannotation of the Arabidopsis thaliana reference genome.</title>
        <authorList>
            <person name="Cheng C.Y."/>
            <person name="Krishnakumar V."/>
            <person name="Chan A.P."/>
            <person name="Thibaud-Nissen F."/>
            <person name="Schobel S."/>
            <person name="Town C.D."/>
        </authorList>
    </citation>
    <scope>GENOME REANNOTATION</scope>
    <source>
        <strain>cv. Columbia</strain>
    </source>
</reference>
<reference key="3">
    <citation type="submission" date="2004-09" db="EMBL/GenBank/DDBJ databases">
        <title>Large-scale analysis of RIKEN Arabidopsis full-length (RAFL) cDNAs.</title>
        <authorList>
            <person name="Totoki Y."/>
            <person name="Seki M."/>
            <person name="Ishida J."/>
            <person name="Nakajima M."/>
            <person name="Enju A."/>
            <person name="Kamiya A."/>
            <person name="Narusaka M."/>
            <person name="Shin-i T."/>
            <person name="Nakagawa M."/>
            <person name="Sakamoto N."/>
            <person name="Oishi K."/>
            <person name="Kohara Y."/>
            <person name="Kobayashi M."/>
            <person name="Toyoda A."/>
            <person name="Sakaki Y."/>
            <person name="Sakurai T."/>
            <person name="Iida K."/>
            <person name="Akiyama K."/>
            <person name="Satou M."/>
            <person name="Toyoda T."/>
            <person name="Konagaya A."/>
            <person name="Carninci P."/>
            <person name="Kawai J."/>
            <person name="Hayashizaki Y."/>
            <person name="Shinozaki K."/>
        </authorList>
    </citation>
    <scope>NUCLEOTIDE SEQUENCE [LARGE SCALE MRNA]</scope>
    <source>
        <strain>cv. Columbia</strain>
    </source>
</reference>
<reference key="4">
    <citation type="submission" date="2003-06" db="EMBL/GenBank/DDBJ databases">
        <title>Sterol (triglyceride) ester hydrolase from Arabidopsis thaliana.</title>
        <authorList>
            <person name="Benveniste P."/>
            <person name="Noiriel A."/>
            <person name="Bouvier-Nave P."/>
            <person name="Schaller H."/>
        </authorList>
    </citation>
    <scope>NUCLEOTIDE SEQUENCE [MRNA] OF 110-418</scope>
    <source>
        <strain>cv. Columbia</strain>
    </source>
</reference>
<reference key="5">
    <citation type="journal article" date="2003" name="Science">
        <title>Empirical analysis of transcriptional activity in the Arabidopsis genome.</title>
        <authorList>
            <person name="Yamada K."/>
            <person name="Lim J."/>
            <person name="Dale J.M."/>
            <person name="Chen H."/>
            <person name="Shinn P."/>
            <person name="Palm C.J."/>
            <person name="Southwick A.M."/>
            <person name="Wu H.C."/>
            <person name="Kim C.J."/>
            <person name="Nguyen M."/>
            <person name="Pham P.K."/>
            <person name="Cheuk R.F."/>
            <person name="Karlin-Newmann G."/>
            <person name="Liu S.X."/>
            <person name="Lam B."/>
            <person name="Sakano H."/>
            <person name="Wu T."/>
            <person name="Yu G."/>
            <person name="Miranda M."/>
            <person name="Quach H.L."/>
            <person name="Tripp M."/>
            <person name="Chang C.H."/>
            <person name="Lee J.M."/>
            <person name="Toriumi M.J."/>
            <person name="Chan M.M."/>
            <person name="Tang C.C."/>
            <person name="Onodera C.S."/>
            <person name="Deng J.M."/>
            <person name="Akiyama K."/>
            <person name="Ansari Y."/>
            <person name="Arakawa T."/>
            <person name="Banh J."/>
            <person name="Banno F."/>
            <person name="Bowser L."/>
            <person name="Brooks S.Y."/>
            <person name="Carninci P."/>
            <person name="Chao Q."/>
            <person name="Choy N."/>
            <person name="Enju A."/>
            <person name="Goldsmith A.D."/>
            <person name="Gurjal M."/>
            <person name="Hansen N.F."/>
            <person name="Hayashizaki Y."/>
            <person name="Johnson-Hopson C."/>
            <person name="Hsuan V.W."/>
            <person name="Iida K."/>
            <person name="Karnes M."/>
            <person name="Khan S."/>
            <person name="Koesema E."/>
            <person name="Ishida J."/>
            <person name="Jiang P.X."/>
            <person name="Jones T."/>
            <person name="Kawai J."/>
            <person name="Kamiya A."/>
            <person name="Meyers C."/>
            <person name="Nakajima M."/>
            <person name="Narusaka M."/>
            <person name="Seki M."/>
            <person name="Sakurai T."/>
            <person name="Satou M."/>
            <person name="Tamse R."/>
            <person name="Vaysberg M."/>
            <person name="Wallender E.K."/>
            <person name="Wong C."/>
            <person name="Yamamura Y."/>
            <person name="Yuan S."/>
            <person name="Shinozaki K."/>
            <person name="Davis R.W."/>
            <person name="Theologis A."/>
            <person name="Ecker J.R."/>
        </authorList>
    </citation>
    <scope>NUCLEOTIDE SEQUENCE [LARGE SCALE MRNA] OF 191-418</scope>
    <source>
        <strain>cv. Columbia</strain>
    </source>
</reference>
<feature type="signal peptide" evidence="2">
    <location>
        <begin position="1"/>
        <end position="31"/>
    </location>
</feature>
<feature type="chain" id="PRO_0000234337" description="Triacylglycerol lipase 2">
    <location>
        <begin position="32"/>
        <end position="418"/>
    </location>
</feature>
<feature type="active site" description="Nucleophile" evidence="1">
    <location>
        <position position="190"/>
    </location>
</feature>
<feature type="active site" description="Charge relay system" evidence="3">
    <location>
        <position position="360"/>
    </location>
</feature>
<feature type="active site" description="Charge relay system" evidence="3">
    <location>
        <position position="393"/>
    </location>
</feature>
<feature type="glycosylation site" description="N-linked (GlcNAc...) asparagine" evidence="2">
    <location>
        <position position="158"/>
    </location>
</feature>
<feature type="glycosylation site" description="N-linked (GlcNAc...) asparagine" evidence="2">
    <location>
        <position position="286"/>
    </location>
</feature>
<feature type="glycosylation site" description="N-linked (GlcNAc...) asparagine" evidence="2">
    <location>
        <position position="342"/>
    </location>
</feature>
<feature type="sequence conflict" description="In Ref. 5." evidence="4" ref="5">
    <original>L</original>
    <variation>Q</variation>
    <location>
        <position position="191"/>
    </location>
</feature>
<feature type="sequence conflict" description="In Ref. 4; AAQ84586." evidence="4" ref="4">
    <original>A</original>
    <variation>G</variation>
    <location>
        <position position="213"/>
    </location>
</feature>
<feature type="sequence conflict" description="In Ref. 4; AAQ84586." evidence="4" ref="4">
    <original>S</original>
    <variation>A</variation>
    <location>
        <position position="242"/>
    </location>
</feature>
<protein>
    <recommendedName>
        <fullName>Triacylglycerol lipase 2</fullName>
        <ecNumber>3.1.1.3</ecNumber>
    </recommendedName>
</protein>
<name>LIP2_ARATH</name>
<accession>Q67ZU1</accession>
<accession>Q681B0</accession>
<accession>Q6VY31</accession>
<accession>Q94AE7</accession>
<accession>Q9FMT2</accession>
<accession>Q9FMT3</accession>
<keyword id="KW-0325">Glycoprotein</keyword>
<keyword id="KW-0378">Hydrolase</keyword>
<keyword id="KW-0442">Lipid degradation</keyword>
<keyword id="KW-0443">Lipid metabolism</keyword>
<keyword id="KW-1185">Reference proteome</keyword>
<keyword id="KW-0964">Secreted</keyword>
<keyword id="KW-0732">Signal</keyword>
<sequence>MAGSVMVPSVSIGLALSVLIFFALSLKTLEARGTFGRLAGQPPQRTAAGGICASSVHIFGYKCEEHDVVTQDGYILNMQRIPEGRAGAVAGDGGKRQPVLIQHGILVDGMSWLLNPADQNLPLILADQGFDVWMGNTRGTRFSRRHKYLNPSQRAFWNWTWDELVSYDLPAMFDHIHGLTGQKIHYLGHSLGTLIGFASFSEKGLVDQVRSAAMLSPVAYLSHMTTVIGDIAAKTFLAEATSILGWPEFNPKSGLVGDFIKAICLKAGIDCYDLVSVITGKNCCLNASTIDLFLANEPQSTSTKNMIHLAQTVRDKELRKYNYGSSDRNIKHYGQAIPPAYNISAIPHELPLFFSYGGLDSLADVKDVEFLLDQFKYHDIDKMNVQFVKDYAHADFIMGVTAKDVVYNQVATFFKRQA</sequence>